<feature type="chain" id="PRO_1000081520" description="Chaperone protein HtpG">
    <location>
        <begin position="1"/>
        <end position="651"/>
    </location>
</feature>
<feature type="region of interest" description="A; substrate-binding" evidence="1">
    <location>
        <begin position="1"/>
        <end position="353"/>
    </location>
</feature>
<feature type="region of interest" description="B" evidence="1">
    <location>
        <begin position="354"/>
        <end position="569"/>
    </location>
</feature>
<feature type="region of interest" description="C" evidence="1">
    <location>
        <begin position="570"/>
        <end position="651"/>
    </location>
</feature>
<dbReference type="EMBL" id="CP000656">
    <property type="protein sequence ID" value="ABP47118.1"/>
    <property type="molecule type" value="Genomic_DNA"/>
</dbReference>
<dbReference type="SMR" id="A4TFF4"/>
<dbReference type="STRING" id="350054.Mflv_4650"/>
<dbReference type="KEGG" id="mgi:Mflv_4650"/>
<dbReference type="eggNOG" id="COG0326">
    <property type="taxonomic scope" value="Bacteria"/>
</dbReference>
<dbReference type="HOGENOM" id="CLU_006684_3_0_11"/>
<dbReference type="OrthoDB" id="9802640at2"/>
<dbReference type="GO" id="GO:0005737">
    <property type="term" value="C:cytoplasm"/>
    <property type="evidence" value="ECO:0007669"/>
    <property type="project" value="UniProtKB-SubCell"/>
</dbReference>
<dbReference type="GO" id="GO:0005524">
    <property type="term" value="F:ATP binding"/>
    <property type="evidence" value="ECO:0007669"/>
    <property type="project" value="UniProtKB-UniRule"/>
</dbReference>
<dbReference type="GO" id="GO:0016887">
    <property type="term" value="F:ATP hydrolysis activity"/>
    <property type="evidence" value="ECO:0007669"/>
    <property type="project" value="InterPro"/>
</dbReference>
<dbReference type="GO" id="GO:0140662">
    <property type="term" value="F:ATP-dependent protein folding chaperone"/>
    <property type="evidence" value="ECO:0007669"/>
    <property type="project" value="InterPro"/>
</dbReference>
<dbReference type="GO" id="GO:0051082">
    <property type="term" value="F:unfolded protein binding"/>
    <property type="evidence" value="ECO:0007669"/>
    <property type="project" value="UniProtKB-UniRule"/>
</dbReference>
<dbReference type="CDD" id="cd16927">
    <property type="entry name" value="HATPase_Hsp90-like"/>
    <property type="match status" value="1"/>
</dbReference>
<dbReference type="FunFam" id="1.20.120.790:FF:000006">
    <property type="entry name" value="Chaperone protein HtpG"/>
    <property type="match status" value="1"/>
</dbReference>
<dbReference type="FunFam" id="3.40.50.11260:FF:000005">
    <property type="entry name" value="Heat shock protein 90"/>
    <property type="match status" value="1"/>
</dbReference>
<dbReference type="FunFam" id="3.30.230.80:FF:000002">
    <property type="entry name" value="Molecular chaperone HtpG"/>
    <property type="match status" value="1"/>
</dbReference>
<dbReference type="FunFam" id="3.30.565.10:FF:000009">
    <property type="entry name" value="Molecular chaperone HtpG"/>
    <property type="match status" value="1"/>
</dbReference>
<dbReference type="Gene3D" id="3.30.230.80">
    <property type="match status" value="1"/>
</dbReference>
<dbReference type="Gene3D" id="3.40.50.11260">
    <property type="match status" value="1"/>
</dbReference>
<dbReference type="Gene3D" id="1.20.120.790">
    <property type="entry name" value="Heat shock protein 90, C-terminal domain"/>
    <property type="match status" value="1"/>
</dbReference>
<dbReference type="Gene3D" id="3.30.565.10">
    <property type="entry name" value="Histidine kinase-like ATPase, C-terminal domain"/>
    <property type="match status" value="1"/>
</dbReference>
<dbReference type="HAMAP" id="MF_00505">
    <property type="entry name" value="HSP90"/>
    <property type="match status" value="1"/>
</dbReference>
<dbReference type="InterPro" id="IPR036890">
    <property type="entry name" value="HATPase_C_sf"/>
</dbReference>
<dbReference type="InterPro" id="IPR037196">
    <property type="entry name" value="HSP90_C"/>
</dbReference>
<dbReference type="InterPro" id="IPR001404">
    <property type="entry name" value="Hsp90_fam"/>
</dbReference>
<dbReference type="InterPro" id="IPR020575">
    <property type="entry name" value="Hsp90_N"/>
</dbReference>
<dbReference type="InterPro" id="IPR020568">
    <property type="entry name" value="Ribosomal_Su5_D2-typ_SF"/>
</dbReference>
<dbReference type="NCBIfam" id="NF003555">
    <property type="entry name" value="PRK05218.1"/>
    <property type="match status" value="1"/>
</dbReference>
<dbReference type="PANTHER" id="PTHR11528">
    <property type="entry name" value="HEAT SHOCK PROTEIN 90 FAMILY MEMBER"/>
    <property type="match status" value="1"/>
</dbReference>
<dbReference type="Pfam" id="PF13589">
    <property type="entry name" value="HATPase_c_3"/>
    <property type="match status" value="1"/>
</dbReference>
<dbReference type="Pfam" id="PF00183">
    <property type="entry name" value="HSP90"/>
    <property type="match status" value="1"/>
</dbReference>
<dbReference type="PIRSF" id="PIRSF002583">
    <property type="entry name" value="Hsp90"/>
    <property type="match status" value="1"/>
</dbReference>
<dbReference type="PRINTS" id="PR00775">
    <property type="entry name" value="HEATSHOCK90"/>
</dbReference>
<dbReference type="SMART" id="SM00387">
    <property type="entry name" value="HATPase_c"/>
    <property type="match status" value="1"/>
</dbReference>
<dbReference type="SUPFAM" id="SSF55874">
    <property type="entry name" value="ATPase domain of HSP90 chaperone/DNA topoisomerase II/histidine kinase"/>
    <property type="match status" value="1"/>
</dbReference>
<dbReference type="SUPFAM" id="SSF110942">
    <property type="entry name" value="HSP90 C-terminal domain"/>
    <property type="match status" value="1"/>
</dbReference>
<dbReference type="SUPFAM" id="SSF54211">
    <property type="entry name" value="Ribosomal protein S5 domain 2-like"/>
    <property type="match status" value="1"/>
</dbReference>
<protein>
    <recommendedName>
        <fullName evidence="1">Chaperone protein HtpG</fullName>
    </recommendedName>
    <alternativeName>
        <fullName evidence="1">Heat shock protein HtpG</fullName>
    </alternativeName>
    <alternativeName>
        <fullName evidence="1">High temperature protein G</fullName>
    </alternativeName>
</protein>
<name>HTPG_MYCGI</name>
<evidence type="ECO:0000255" key="1">
    <source>
        <dbReference type="HAMAP-Rule" id="MF_00505"/>
    </source>
</evidence>
<comment type="function">
    <text evidence="1">Molecular chaperone. Has ATPase activity.</text>
</comment>
<comment type="subunit">
    <text evidence="1">Homodimer.</text>
</comment>
<comment type="subcellular location">
    <subcellularLocation>
        <location evidence="1">Cytoplasm</location>
    </subcellularLocation>
</comment>
<comment type="similarity">
    <text evidence="1">Belongs to the heat shock protein 90 family.</text>
</comment>
<accession>A4TFF4</accession>
<keyword id="KW-0067">ATP-binding</keyword>
<keyword id="KW-0143">Chaperone</keyword>
<keyword id="KW-0963">Cytoplasm</keyword>
<keyword id="KW-0547">Nucleotide-binding</keyword>
<keyword id="KW-0346">Stress response</keyword>
<proteinExistence type="inferred from homology"/>
<sequence>MAPHVEQLEFQAEARQLLDLMIHSVYSNKDSFLRELISNASDALDKLRLEAFRNKDLDVDTSDLHIEIVVDKEARTLTVRDNGIGMSRDEVVRLIGTLAKSGTAELRQQLREAKDANANEELIGQFGIGFYASFMVADRVELLTRKAGESEATRWESTGEGSYTIETVDQAGGEVPQGTSVTLHLKPEDREDELHDYTSEWKIRELVKQYSDFIAWPVRMDVERRTPASEEGGEETVTVETQTLNSMKALWARPRDEVSDEEYTEFYKHVAHAWDEPLETIAMRAEGTFEYQALLFIPSHAPFDLFQQNATVGVQLYVKRVFIMGDCDQLMPPYLRFVKGVVDAQDMSLNVSREILQQDRQIRAIRRRLTKKVLSTIAEMQAERPEKYRTFWTQFGRVLKEGLLSDTDNQETLLRVSSFASTRSDDEPTTLAEYVERMPEGQTQIFYAAGESRQQLLNSPHLEAFKAKGYEVLLLTDPVDEVWVESIHEFDGKPLQSVAKGEVDLDSEADKEAQETERQQREKEFADVIAWLTEVLGDHVKEVRLSTRLTDSPACLITDTFGITPALARMYRASGQPVPVEKRILELNPTHPLVVGLREAHESRGADDELAGTAELLYGTALLAEGGALEDPARFAGLLADRLTRMVGEQS</sequence>
<gene>
    <name evidence="1" type="primary">htpG</name>
    <name type="ordered locus">Mflv_4650</name>
</gene>
<organism>
    <name type="scientific">Mycolicibacterium gilvum (strain PYR-GCK)</name>
    <name type="common">Mycobacterium gilvum (strain PYR-GCK)</name>
    <dbReference type="NCBI Taxonomy" id="350054"/>
    <lineage>
        <taxon>Bacteria</taxon>
        <taxon>Bacillati</taxon>
        <taxon>Actinomycetota</taxon>
        <taxon>Actinomycetes</taxon>
        <taxon>Mycobacteriales</taxon>
        <taxon>Mycobacteriaceae</taxon>
        <taxon>Mycolicibacterium</taxon>
    </lineage>
</organism>
<reference key="1">
    <citation type="submission" date="2007-04" db="EMBL/GenBank/DDBJ databases">
        <title>Complete sequence of chromosome of Mycobacterium gilvum PYR-GCK.</title>
        <authorList>
            <consortium name="US DOE Joint Genome Institute"/>
            <person name="Copeland A."/>
            <person name="Lucas S."/>
            <person name="Lapidus A."/>
            <person name="Barry K."/>
            <person name="Detter J.C."/>
            <person name="Glavina del Rio T."/>
            <person name="Hammon N."/>
            <person name="Israni S."/>
            <person name="Dalin E."/>
            <person name="Tice H."/>
            <person name="Pitluck S."/>
            <person name="Chain P."/>
            <person name="Malfatti S."/>
            <person name="Shin M."/>
            <person name="Vergez L."/>
            <person name="Schmutz J."/>
            <person name="Larimer F."/>
            <person name="Land M."/>
            <person name="Hauser L."/>
            <person name="Kyrpides N."/>
            <person name="Mikhailova N."/>
            <person name="Miller C."/>
            <person name="Richardson P."/>
        </authorList>
    </citation>
    <scope>NUCLEOTIDE SEQUENCE [LARGE SCALE GENOMIC DNA]</scope>
    <source>
        <strain>PYR-GCK</strain>
    </source>
</reference>